<organism>
    <name type="scientific">Dichelobacter nodosus (strain VCS1703A)</name>
    <dbReference type="NCBI Taxonomy" id="246195"/>
    <lineage>
        <taxon>Bacteria</taxon>
        <taxon>Pseudomonadati</taxon>
        <taxon>Pseudomonadota</taxon>
        <taxon>Gammaproteobacteria</taxon>
        <taxon>Cardiobacteriales</taxon>
        <taxon>Cardiobacteriaceae</taxon>
        <taxon>Dichelobacter</taxon>
    </lineage>
</organism>
<comment type="function">
    <text evidence="1">Catalyzes the decarboxylation of orotidine 5'-monophosphate (OMP) to uridine 5'-monophosphate (UMP).</text>
</comment>
<comment type="catalytic activity">
    <reaction evidence="1">
        <text>orotidine 5'-phosphate + H(+) = UMP + CO2</text>
        <dbReference type="Rhea" id="RHEA:11596"/>
        <dbReference type="ChEBI" id="CHEBI:15378"/>
        <dbReference type="ChEBI" id="CHEBI:16526"/>
        <dbReference type="ChEBI" id="CHEBI:57538"/>
        <dbReference type="ChEBI" id="CHEBI:57865"/>
        <dbReference type="EC" id="4.1.1.23"/>
    </reaction>
</comment>
<comment type="pathway">
    <text evidence="1">Pyrimidine metabolism; UMP biosynthesis via de novo pathway; UMP from orotate: step 2/2.</text>
</comment>
<comment type="subunit">
    <text evidence="1">Homodimer.</text>
</comment>
<comment type="similarity">
    <text evidence="1">Belongs to the OMP decarboxylase family. Type 1 subfamily.</text>
</comment>
<accession>A5EVH6</accession>
<gene>
    <name evidence="1" type="primary">pyrF</name>
    <name type="ordered locus">DNO_0564</name>
</gene>
<evidence type="ECO:0000255" key="1">
    <source>
        <dbReference type="HAMAP-Rule" id="MF_01200"/>
    </source>
</evidence>
<feature type="chain" id="PRO_1000065903" description="Orotidine 5'-phosphate decarboxylase">
    <location>
        <begin position="1"/>
        <end position="229"/>
    </location>
</feature>
<feature type="active site" description="Proton donor" evidence="1">
    <location>
        <position position="62"/>
    </location>
</feature>
<feature type="binding site" evidence="1">
    <location>
        <position position="11"/>
    </location>
    <ligand>
        <name>substrate</name>
    </ligand>
</feature>
<feature type="binding site" evidence="1">
    <location>
        <position position="33"/>
    </location>
    <ligand>
        <name>substrate</name>
    </ligand>
</feature>
<feature type="binding site" evidence="1">
    <location>
        <begin position="60"/>
        <end position="69"/>
    </location>
    <ligand>
        <name>substrate</name>
    </ligand>
</feature>
<feature type="binding site" evidence="1">
    <location>
        <position position="119"/>
    </location>
    <ligand>
        <name>substrate</name>
    </ligand>
</feature>
<feature type="binding site" evidence="1">
    <location>
        <position position="180"/>
    </location>
    <ligand>
        <name>substrate</name>
    </ligand>
</feature>
<feature type="binding site" evidence="1">
    <location>
        <position position="189"/>
    </location>
    <ligand>
        <name>substrate</name>
    </ligand>
</feature>
<feature type="binding site" evidence="1">
    <location>
        <position position="209"/>
    </location>
    <ligand>
        <name>substrate</name>
    </ligand>
</feature>
<feature type="binding site" evidence="1">
    <location>
        <position position="210"/>
    </location>
    <ligand>
        <name>substrate</name>
    </ligand>
</feature>
<reference key="1">
    <citation type="journal article" date="2007" name="Nat. Biotechnol.">
        <title>Genome sequence and identification of candidate vaccine antigens from the animal pathogen Dichelobacter nodosus.</title>
        <authorList>
            <person name="Myers G.S.A."/>
            <person name="Parker D."/>
            <person name="Al-Hasani K."/>
            <person name="Kennan R.M."/>
            <person name="Seemann T."/>
            <person name="Ren Q."/>
            <person name="Badger J.H."/>
            <person name="Selengut J.D."/>
            <person name="Deboy R.T."/>
            <person name="Tettelin H."/>
            <person name="Boyce J.D."/>
            <person name="McCarl V.P."/>
            <person name="Han X."/>
            <person name="Nelson W.C."/>
            <person name="Madupu R."/>
            <person name="Mohamoud Y."/>
            <person name="Holley T."/>
            <person name="Fedorova N."/>
            <person name="Khouri H."/>
            <person name="Bottomley S.P."/>
            <person name="Whittington R.J."/>
            <person name="Adler B."/>
            <person name="Songer J.G."/>
            <person name="Rood J.I."/>
            <person name="Paulsen I.T."/>
        </authorList>
    </citation>
    <scope>NUCLEOTIDE SEQUENCE [LARGE SCALE GENOMIC DNA]</scope>
    <source>
        <strain>VCS1703A</strain>
    </source>
</reference>
<sequence length="229" mass="24302">MNHSPIIIALDFPQKEPALTCAKQLSPQHCRLKIGSELFTREGAPLIAQLRELGFEIFLDLKFHDIPNTVAAAVRVAADLGVWMVNVHASGGLAMMQAAKEAATAAKQAPLLTAVTVLTSFDDAALGSVGVDDLMESQVQRLARLAFTAGLDGVVCSAAEVPVIKKSTAPQFLTVTPGIRPQQSAHDDQKRVFTPKEALAQGSDYLVIGRPITRAADPAQALNAIMATL</sequence>
<proteinExistence type="inferred from homology"/>
<protein>
    <recommendedName>
        <fullName evidence="1">Orotidine 5'-phosphate decarboxylase</fullName>
        <ecNumber evidence="1">4.1.1.23</ecNumber>
    </recommendedName>
    <alternativeName>
        <fullName evidence="1">OMP decarboxylase</fullName>
        <shortName evidence="1">OMPDCase</shortName>
        <shortName evidence="1">OMPdecase</shortName>
    </alternativeName>
</protein>
<dbReference type="EC" id="4.1.1.23" evidence="1"/>
<dbReference type="EMBL" id="CP000513">
    <property type="protein sequence ID" value="ABQ13573.1"/>
    <property type="molecule type" value="Genomic_DNA"/>
</dbReference>
<dbReference type="RefSeq" id="WP_012030898.1">
    <property type="nucleotide sequence ID" value="NC_009446.1"/>
</dbReference>
<dbReference type="SMR" id="A5EVH6"/>
<dbReference type="STRING" id="246195.DNO_0564"/>
<dbReference type="KEGG" id="dno:DNO_0564"/>
<dbReference type="eggNOG" id="COG0284">
    <property type="taxonomic scope" value="Bacteria"/>
</dbReference>
<dbReference type="HOGENOM" id="CLU_067069_0_0_6"/>
<dbReference type="OrthoDB" id="9806203at2"/>
<dbReference type="UniPathway" id="UPA00070">
    <property type="reaction ID" value="UER00120"/>
</dbReference>
<dbReference type="Proteomes" id="UP000000248">
    <property type="component" value="Chromosome"/>
</dbReference>
<dbReference type="GO" id="GO:0005829">
    <property type="term" value="C:cytosol"/>
    <property type="evidence" value="ECO:0007669"/>
    <property type="project" value="TreeGrafter"/>
</dbReference>
<dbReference type="GO" id="GO:0004590">
    <property type="term" value="F:orotidine-5'-phosphate decarboxylase activity"/>
    <property type="evidence" value="ECO:0007669"/>
    <property type="project" value="UniProtKB-UniRule"/>
</dbReference>
<dbReference type="GO" id="GO:0006207">
    <property type="term" value="P:'de novo' pyrimidine nucleobase biosynthetic process"/>
    <property type="evidence" value="ECO:0007669"/>
    <property type="project" value="InterPro"/>
</dbReference>
<dbReference type="GO" id="GO:0044205">
    <property type="term" value="P:'de novo' UMP biosynthetic process"/>
    <property type="evidence" value="ECO:0007669"/>
    <property type="project" value="UniProtKB-UniRule"/>
</dbReference>
<dbReference type="CDD" id="cd04725">
    <property type="entry name" value="OMP_decarboxylase_like"/>
    <property type="match status" value="1"/>
</dbReference>
<dbReference type="FunFam" id="3.20.20.70:FF:000015">
    <property type="entry name" value="Orotidine 5'-phosphate decarboxylase"/>
    <property type="match status" value="1"/>
</dbReference>
<dbReference type="Gene3D" id="3.20.20.70">
    <property type="entry name" value="Aldolase class I"/>
    <property type="match status" value="1"/>
</dbReference>
<dbReference type="HAMAP" id="MF_01200_B">
    <property type="entry name" value="OMPdecase_type1_B"/>
    <property type="match status" value="1"/>
</dbReference>
<dbReference type="InterPro" id="IPR013785">
    <property type="entry name" value="Aldolase_TIM"/>
</dbReference>
<dbReference type="InterPro" id="IPR014732">
    <property type="entry name" value="OMPdecase"/>
</dbReference>
<dbReference type="InterPro" id="IPR018089">
    <property type="entry name" value="OMPdecase_AS"/>
</dbReference>
<dbReference type="InterPro" id="IPR047596">
    <property type="entry name" value="OMPdecase_bac"/>
</dbReference>
<dbReference type="InterPro" id="IPR001754">
    <property type="entry name" value="OMPdeCOase_dom"/>
</dbReference>
<dbReference type="InterPro" id="IPR011060">
    <property type="entry name" value="RibuloseP-bd_barrel"/>
</dbReference>
<dbReference type="NCBIfam" id="NF001273">
    <property type="entry name" value="PRK00230.1"/>
    <property type="match status" value="1"/>
</dbReference>
<dbReference type="NCBIfam" id="TIGR01740">
    <property type="entry name" value="pyrF"/>
    <property type="match status" value="1"/>
</dbReference>
<dbReference type="PANTHER" id="PTHR32119">
    <property type="entry name" value="OROTIDINE 5'-PHOSPHATE DECARBOXYLASE"/>
    <property type="match status" value="1"/>
</dbReference>
<dbReference type="PANTHER" id="PTHR32119:SF2">
    <property type="entry name" value="OROTIDINE 5'-PHOSPHATE DECARBOXYLASE"/>
    <property type="match status" value="1"/>
</dbReference>
<dbReference type="Pfam" id="PF00215">
    <property type="entry name" value="OMPdecase"/>
    <property type="match status" value="1"/>
</dbReference>
<dbReference type="SMART" id="SM00934">
    <property type="entry name" value="OMPdecase"/>
    <property type="match status" value="1"/>
</dbReference>
<dbReference type="SUPFAM" id="SSF51366">
    <property type="entry name" value="Ribulose-phoshate binding barrel"/>
    <property type="match status" value="1"/>
</dbReference>
<dbReference type="PROSITE" id="PS00156">
    <property type="entry name" value="OMPDECASE"/>
    <property type="match status" value="1"/>
</dbReference>
<keyword id="KW-0210">Decarboxylase</keyword>
<keyword id="KW-0456">Lyase</keyword>
<keyword id="KW-0665">Pyrimidine biosynthesis</keyword>
<keyword id="KW-1185">Reference proteome</keyword>
<name>PYRF_DICNV</name>